<feature type="chain" id="PRO_0000073437" description="Alpha-actinin-2">
    <location>
        <begin position="1"/>
        <end position="897"/>
    </location>
</feature>
<feature type="domain" description="Calponin-homology (CH) 1" evidence="2">
    <location>
        <begin position="41"/>
        <end position="145"/>
    </location>
</feature>
<feature type="domain" description="Calponin-homology (CH) 2" evidence="2">
    <location>
        <begin position="154"/>
        <end position="260"/>
    </location>
</feature>
<feature type="repeat" description="Spectrin 1">
    <location>
        <begin position="284"/>
        <end position="394"/>
    </location>
</feature>
<feature type="repeat" description="Spectrin 2">
    <location>
        <begin position="404"/>
        <end position="509"/>
    </location>
</feature>
<feature type="repeat" description="Spectrin 3">
    <location>
        <begin position="519"/>
        <end position="630"/>
    </location>
</feature>
<feature type="repeat" description="Spectrin 4">
    <location>
        <begin position="640"/>
        <end position="743"/>
    </location>
</feature>
<feature type="domain" description="EF-hand 1" evidence="3">
    <location>
        <begin position="756"/>
        <end position="791"/>
    </location>
</feature>
<feature type="domain" description="EF-hand 2" evidence="3">
    <location>
        <begin position="792"/>
        <end position="827"/>
    </location>
</feature>
<feature type="region of interest" description="Actin-binding">
    <location>
        <begin position="1"/>
        <end position="257"/>
    </location>
</feature>
<feature type="binding site" evidence="4">
    <location>
        <position position="769"/>
    </location>
    <ligand>
        <name>Ca(2+)</name>
        <dbReference type="ChEBI" id="CHEBI:29108"/>
        <label>1</label>
    </ligand>
</feature>
<feature type="binding site" evidence="4">
    <location>
        <position position="773"/>
    </location>
    <ligand>
        <name>Ca(2+)</name>
        <dbReference type="ChEBI" id="CHEBI:29108"/>
        <label>1</label>
    </ligand>
</feature>
<feature type="binding site" evidence="4">
    <location>
        <position position="780"/>
    </location>
    <ligand>
        <name>Ca(2+)</name>
        <dbReference type="ChEBI" id="CHEBI:29108"/>
        <label>1</label>
    </ligand>
</feature>
<feature type="binding site" evidence="4">
    <location>
        <position position="805"/>
    </location>
    <ligand>
        <name>Ca(2+)</name>
        <dbReference type="ChEBI" id="CHEBI:29108"/>
        <label>2</label>
    </ligand>
</feature>
<feature type="binding site" evidence="4">
    <location>
        <position position="807"/>
    </location>
    <ligand>
        <name>Ca(2+)</name>
        <dbReference type="ChEBI" id="CHEBI:29108"/>
        <label>2</label>
    </ligand>
</feature>
<feature type="binding site" evidence="4">
    <location>
        <position position="811"/>
    </location>
    <ligand>
        <name>Ca(2+)</name>
        <dbReference type="ChEBI" id="CHEBI:29108"/>
        <label>2</label>
    </ligand>
</feature>
<feature type="splice variant" id="VSP_012544" description="In isoform 2." evidence="4">
    <original>L</original>
    <variation>LDESDNLHSDEFKACLISLGEVGNDLQ</variation>
    <location>
        <position position="792"/>
    </location>
</feature>
<reference key="1">
    <citation type="journal article" date="1988" name="Eur. J. Biochem.">
        <title>Primary structure of chicken skeletal muscle and fibroblast alpha-actinins deduced from cDNA sequences.</title>
        <authorList>
            <person name="Arimura C."/>
            <person name="Suzuki T."/>
            <person name="Yanagisawa M."/>
            <person name="Imamura M."/>
            <person name="Hamada Y."/>
            <person name="Masaki T."/>
        </authorList>
    </citation>
    <scope>NUCLEOTIDE SEQUENCE [MRNA] (ISOFORM 1)</scope>
</reference>
<reference key="2">
    <citation type="journal article" date="1991" name="Exp. Cell Res.">
        <title>Transfection of chicken skeletal muscle alpha-actinin cDNA into nonmuscle and myogenic cells: dimerization is not essential for alpha-actinin to bind to microfilaments.</title>
        <authorList>
            <person name="Tokuue Y."/>
            <person name="Goto S."/>
            <person name="Imamura M."/>
            <person name="Obinata T."/>
            <person name="Masaki T."/>
            <person name="Endo T."/>
        </authorList>
    </citation>
    <scope>NUCLEOTIDE SEQUENCE [MRNA] (ISOFORM 1)</scope>
</reference>
<reference key="3">
    <citation type="journal article" date="1992" name="Eur. J. Biochem.">
        <title>A chick skeletal-muscle alpha-actinin gene gives rise to two alternatively spliced isoforms which differ in the EF-hand Ca(2+)-binding domain.</title>
        <authorList>
            <person name="Parr T."/>
            <person name="Waites G.T."/>
            <person name="Patel B."/>
            <person name="Millake D.B."/>
            <person name="Critchley D.R."/>
        </authorList>
    </citation>
    <scope>NUCLEOTIDE SEQUENCE [GENOMIC DNA] OF 662-867 (ISOFORM 2)</scope>
</reference>
<protein>
    <recommendedName>
        <fullName>Alpha-actinin-2</fullName>
    </recommendedName>
    <alternativeName>
        <fullName>Alpha-actinin skeletal muscle isoform 2</fullName>
    </alternativeName>
    <alternativeName>
        <fullName>F-actin cross-linking protein</fullName>
    </alternativeName>
</protein>
<evidence type="ECO:0000250" key="1"/>
<evidence type="ECO:0000255" key="2">
    <source>
        <dbReference type="PROSITE-ProRule" id="PRU00044"/>
    </source>
</evidence>
<evidence type="ECO:0000255" key="3">
    <source>
        <dbReference type="PROSITE-ProRule" id="PRU00448"/>
    </source>
</evidence>
<evidence type="ECO:0000305" key="4"/>
<dbReference type="EMBL" id="X13874">
    <property type="protein sequence ID" value="CAA32078.1"/>
    <property type="molecule type" value="mRNA"/>
</dbReference>
<dbReference type="EMBL" id="X59247">
    <property type="protein sequence ID" value="CAA41935.1"/>
    <property type="molecule type" value="mRNA"/>
</dbReference>
<dbReference type="EMBL" id="X68797">
    <property type="protein sequence ID" value="CAA48702.1"/>
    <property type="molecule type" value="Genomic_DNA"/>
</dbReference>
<dbReference type="EMBL" id="X68798">
    <property type="protein sequence ID" value="CAA48702.1"/>
    <property type="status" value="JOINED"/>
    <property type="molecule type" value="Genomic_DNA"/>
</dbReference>
<dbReference type="EMBL" id="X68799">
    <property type="protein sequence ID" value="CAA48702.1"/>
    <property type="status" value="JOINED"/>
    <property type="molecule type" value="Genomic_DNA"/>
</dbReference>
<dbReference type="EMBL" id="X68800">
    <property type="protein sequence ID" value="CAA48702.1"/>
    <property type="status" value="JOINED"/>
    <property type="molecule type" value="Genomic_DNA"/>
</dbReference>
<dbReference type="EMBL" id="X68801">
    <property type="protein sequence ID" value="CAA48702.1"/>
    <property type="status" value="JOINED"/>
    <property type="molecule type" value="Genomic_DNA"/>
</dbReference>
<dbReference type="EMBL" id="X68802">
    <property type="protein sequence ID" value="CAA48702.1"/>
    <property type="status" value="JOINED"/>
    <property type="molecule type" value="Genomic_DNA"/>
</dbReference>
<dbReference type="PIR" id="S02032">
    <property type="entry name" value="S02032"/>
</dbReference>
<dbReference type="RefSeq" id="NP_990654.1">
    <molecule id="P20111-1"/>
    <property type="nucleotide sequence ID" value="NM_205323.2"/>
</dbReference>
<dbReference type="SMR" id="P20111"/>
<dbReference type="FunCoup" id="P20111">
    <property type="interactions" value="1004"/>
</dbReference>
<dbReference type="STRING" id="9031.ENSGALP00000054549"/>
<dbReference type="PaxDb" id="9031-ENSGALP00000023309"/>
<dbReference type="GeneID" id="396263"/>
<dbReference type="KEGG" id="gga:396263"/>
<dbReference type="CTD" id="88"/>
<dbReference type="VEuPathDB" id="HostDB:geneid_396263"/>
<dbReference type="eggNOG" id="KOG0035">
    <property type="taxonomic scope" value="Eukaryota"/>
</dbReference>
<dbReference type="HOGENOM" id="CLU_005217_1_1_1"/>
<dbReference type="InParanoid" id="P20111"/>
<dbReference type="OMA" id="IMILVDP"/>
<dbReference type="OrthoDB" id="10017054at2759"/>
<dbReference type="PhylomeDB" id="P20111"/>
<dbReference type="TreeFam" id="TF352676"/>
<dbReference type="Reactome" id="R-GGA-114608">
    <property type="pathway name" value="Platelet degranulation"/>
</dbReference>
<dbReference type="Reactome" id="R-GGA-390522">
    <property type="pathway name" value="Striated Muscle Contraction"/>
</dbReference>
<dbReference type="Reactome" id="R-GGA-438066">
    <property type="pathway name" value="Unblocking of NMDA receptors, glutamate binding and activation"/>
</dbReference>
<dbReference type="Reactome" id="R-GGA-5673001">
    <property type="pathway name" value="RAF/MAP kinase cascade"/>
</dbReference>
<dbReference type="PRO" id="PR:P20111"/>
<dbReference type="Proteomes" id="UP000000539">
    <property type="component" value="Chromosome 3"/>
</dbReference>
<dbReference type="Bgee" id="ENSGALG00000014463">
    <property type="expression patterns" value="Expressed in skeletal muscle tissue and 10 other cell types or tissues"/>
</dbReference>
<dbReference type="GO" id="GO:0030054">
    <property type="term" value="C:cell junction"/>
    <property type="evidence" value="ECO:0000318"/>
    <property type="project" value="GO_Central"/>
</dbReference>
<dbReference type="GO" id="GO:0042995">
    <property type="term" value="C:cell projection"/>
    <property type="evidence" value="ECO:0000318"/>
    <property type="project" value="GO_Central"/>
</dbReference>
<dbReference type="GO" id="GO:0030864">
    <property type="term" value="C:cortical actin cytoskeleton"/>
    <property type="evidence" value="ECO:0000318"/>
    <property type="project" value="GO_Central"/>
</dbReference>
<dbReference type="GO" id="GO:0030175">
    <property type="term" value="C:filopodium"/>
    <property type="evidence" value="ECO:0000314"/>
    <property type="project" value="UniProtKB"/>
</dbReference>
<dbReference type="GO" id="GO:0005886">
    <property type="term" value="C:plasma membrane"/>
    <property type="evidence" value="ECO:0000318"/>
    <property type="project" value="GO_Central"/>
</dbReference>
<dbReference type="GO" id="GO:0030018">
    <property type="term" value="C:Z disc"/>
    <property type="evidence" value="ECO:0000250"/>
    <property type="project" value="UniProtKB"/>
</dbReference>
<dbReference type="GO" id="GO:0051015">
    <property type="term" value="F:actin filament binding"/>
    <property type="evidence" value="ECO:0000318"/>
    <property type="project" value="GO_Central"/>
</dbReference>
<dbReference type="GO" id="GO:0005509">
    <property type="term" value="F:calcium ion binding"/>
    <property type="evidence" value="ECO:0007669"/>
    <property type="project" value="InterPro"/>
</dbReference>
<dbReference type="GO" id="GO:0030036">
    <property type="term" value="P:actin cytoskeleton organization"/>
    <property type="evidence" value="ECO:0000318"/>
    <property type="project" value="GO_Central"/>
</dbReference>
<dbReference type="GO" id="GO:0030035">
    <property type="term" value="P:microspike assembly"/>
    <property type="evidence" value="ECO:0000314"/>
    <property type="project" value="UniProtKB"/>
</dbReference>
<dbReference type="GO" id="GO:0055001">
    <property type="term" value="P:muscle cell development"/>
    <property type="evidence" value="ECO:0000318"/>
    <property type="project" value="GO_Central"/>
</dbReference>
<dbReference type="CDD" id="cd21214">
    <property type="entry name" value="CH_ACTN_rpt1"/>
    <property type="match status" value="1"/>
</dbReference>
<dbReference type="CDD" id="cd21216">
    <property type="entry name" value="CH_ACTN_rpt2"/>
    <property type="match status" value="1"/>
</dbReference>
<dbReference type="CDD" id="cd00051">
    <property type="entry name" value="EFh"/>
    <property type="match status" value="1"/>
</dbReference>
<dbReference type="CDD" id="cd00176">
    <property type="entry name" value="SPEC"/>
    <property type="match status" value="1"/>
</dbReference>
<dbReference type="FunFam" id="1.10.238.10:FF:000004">
    <property type="entry name" value="Actinin alpha 1"/>
    <property type="match status" value="1"/>
</dbReference>
<dbReference type="FunFam" id="1.10.418.10:FF:000001">
    <property type="entry name" value="Actinin alpha 1"/>
    <property type="match status" value="1"/>
</dbReference>
<dbReference type="FunFam" id="1.20.58.60:FF:000004">
    <property type="entry name" value="Actinin alpha 1"/>
    <property type="match status" value="1"/>
</dbReference>
<dbReference type="FunFam" id="1.20.58.60:FF:000005">
    <property type="entry name" value="Actinin alpha 1"/>
    <property type="match status" value="1"/>
</dbReference>
<dbReference type="FunFam" id="1.10.418.10:FF:000005">
    <property type="entry name" value="Actinin alpha 4"/>
    <property type="match status" value="1"/>
</dbReference>
<dbReference type="FunFam" id="1.10.238.10:FF:000018">
    <property type="entry name" value="Actinin, alpha 1"/>
    <property type="match status" value="1"/>
</dbReference>
<dbReference type="FunFam" id="1.20.58.60:FF:000002">
    <property type="entry name" value="Actinin, alpha 1"/>
    <property type="match status" value="1"/>
</dbReference>
<dbReference type="FunFam" id="1.20.58.60:FF:000003">
    <property type="entry name" value="Actinin, alpha 1"/>
    <property type="match status" value="1"/>
</dbReference>
<dbReference type="Gene3D" id="1.20.58.60">
    <property type="match status" value="4"/>
</dbReference>
<dbReference type="Gene3D" id="1.10.418.10">
    <property type="entry name" value="Calponin-like domain"/>
    <property type="match status" value="2"/>
</dbReference>
<dbReference type="Gene3D" id="1.10.238.10">
    <property type="entry name" value="EF-hand"/>
    <property type="match status" value="2"/>
</dbReference>
<dbReference type="InterPro" id="IPR001589">
    <property type="entry name" value="Actinin_actin-bd_CS"/>
</dbReference>
<dbReference type="InterPro" id="IPR001715">
    <property type="entry name" value="CH_dom"/>
</dbReference>
<dbReference type="InterPro" id="IPR036872">
    <property type="entry name" value="CH_dom_sf"/>
</dbReference>
<dbReference type="InterPro" id="IPR011992">
    <property type="entry name" value="EF-hand-dom_pair"/>
</dbReference>
<dbReference type="InterPro" id="IPR014837">
    <property type="entry name" value="EF-hand_Ca_insen"/>
</dbReference>
<dbReference type="InterPro" id="IPR002048">
    <property type="entry name" value="EF_hand_dom"/>
</dbReference>
<dbReference type="InterPro" id="IPR018159">
    <property type="entry name" value="Spectrin/alpha-actinin"/>
</dbReference>
<dbReference type="InterPro" id="IPR002017">
    <property type="entry name" value="Spectrin_repeat"/>
</dbReference>
<dbReference type="PANTHER" id="PTHR11915">
    <property type="entry name" value="SPECTRIN/FILAMIN RELATED CYTOSKELETAL PROTEIN"/>
    <property type="match status" value="1"/>
</dbReference>
<dbReference type="Pfam" id="PF00307">
    <property type="entry name" value="CH"/>
    <property type="match status" value="2"/>
</dbReference>
<dbReference type="Pfam" id="PF13499">
    <property type="entry name" value="EF-hand_7"/>
    <property type="match status" value="1"/>
</dbReference>
<dbReference type="Pfam" id="PF08726">
    <property type="entry name" value="EFhand_Ca_insen"/>
    <property type="match status" value="1"/>
</dbReference>
<dbReference type="Pfam" id="PF00435">
    <property type="entry name" value="Spectrin"/>
    <property type="match status" value="4"/>
</dbReference>
<dbReference type="SMART" id="SM00033">
    <property type="entry name" value="CH"/>
    <property type="match status" value="2"/>
</dbReference>
<dbReference type="SMART" id="SM00054">
    <property type="entry name" value="EFh"/>
    <property type="match status" value="2"/>
</dbReference>
<dbReference type="SMART" id="SM01184">
    <property type="entry name" value="efhand_Ca_insen"/>
    <property type="match status" value="1"/>
</dbReference>
<dbReference type="SMART" id="SM00150">
    <property type="entry name" value="SPEC"/>
    <property type="match status" value="2"/>
</dbReference>
<dbReference type="SUPFAM" id="SSF47576">
    <property type="entry name" value="Calponin-homology domain, CH-domain"/>
    <property type="match status" value="1"/>
</dbReference>
<dbReference type="SUPFAM" id="SSF47473">
    <property type="entry name" value="EF-hand"/>
    <property type="match status" value="1"/>
</dbReference>
<dbReference type="SUPFAM" id="SSF46966">
    <property type="entry name" value="Spectrin repeat"/>
    <property type="match status" value="4"/>
</dbReference>
<dbReference type="PROSITE" id="PS00019">
    <property type="entry name" value="ACTININ_1"/>
    <property type="match status" value="1"/>
</dbReference>
<dbReference type="PROSITE" id="PS00020">
    <property type="entry name" value="ACTININ_2"/>
    <property type="match status" value="1"/>
</dbReference>
<dbReference type="PROSITE" id="PS50021">
    <property type="entry name" value="CH"/>
    <property type="match status" value="2"/>
</dbReference>
<dbReference type="PROSITE" id="PS50222">
    <property type="entry name" value="EF_HAND_2"/>
    <property type="match status" value="2"/>
</dbReference>
<accession>P20111</accession>
<accession>Q90821</accession>
<comment type="function">
    <text evidence="1">F-actin cross-linking protein which is thought to anchor actin to a variety of intracellular structures. This is a bundling protein (By similarity).</text>
</comment>
<comment type="subunit">
    <text>Homodimer; antiparallel.</text>
</comment>
<comment type="subcellular location">
    <subcellularLocation>
        <location evidence="1">Cytoplasm</location>
        <location evidence="1">Myofibril</location>
        <location evidence="1">Sarcomere</location>
        <location evidence="1">Z line</location>
    </subcellularLocation>
</comment>
<comment type="alternative products">
    <event type="alternative splicing"/>
    <isoform>
        <id>P20111-1</id>
        <name>1</name>
        <sequence type="displayed"/>
    </isoform>
    <isoform>
        <id>P20111-2</id>
        <name>2</name>
        <sequence type="described" ref="VSP_012544"/>
    </isoform>
</comment>
<comment type="PTM">
    <text evidence="1">Ubiquitinated by FBXL22, leading to proteasomal degradation.</text>
</comment>
<comment type="similarity">
    <text evidence="4">Belongs to the alpha-actinin family.</text>
</comment>
<sequence length="897" mass="104275">MNSMNQIETNMQYTYNYEEDEYMTQEEEWDRDLLLDPAWEKQQRKTFTAWCNSHLRKAGTQIENIEEDFRNGLKLMLLLEVISGERLPKPDRGKMRFHKIANVNKALDYIASKGVKLVSIGAEEIVDGNVKMTLGMIWTIILRFAIQDISVEETSAKEGLLLWCQRKTAPYRNVNIQNFHLSWKDGLGLCALIHRHRPDLIDYSKLNKDDPIGNINLAMEIAEKHLDIPKMLDAEDIVNTPKPDERAIMTYVSCFYHAFAGAEQAETAANRICKVLAVNQENERLMEEYERLASELLEWIRRTIPWLENRTPEKTMQAMQKKLEDFRDYRRKHKPPKVQEKCQLEINFNTLQTKLRISNRPAFMPSEGKMVSDIAGAWQRLEQAEKGYEEWLLNEIRRLERLEHLAEKFRQKASTHEQWAYGKEQILLQKDYESASLTEVRAMLRKHEAFESDLAAHQDRVEQIAAIAQELNELDYHDAASVNDRCQKICDQWDSLGTLTQKRREALERTEKLLETIDQLHLEFAKRAAPFNNWMEGAMEDLQDMFIVHSIEEIQSLISAHDQFKATLPEADGERQAILSIQNEVEKVIQSYSMRISASNPYSTVTVEEIRTKWEKVKQLVPQRDQSLQEELARQHANERLRRQFAAQANVIGPWIQTKMEEIARSSIEMTGPLEDQMNQLKQYEQNIINYKHNIDKLEGDHQLIQEALVFDNKHTNYTMEHIRVGWELLLTTIARTINEVETQILTRDAKGITQEQMNDFRASFNHFDRRKNGLMDHDDFRACLISMGYDLGEAEFARIMSLVDPNGQGTVTFQSFIDFMTRETADTDTAEQVIASFRILASDKPYILADELRRELPPEQAQYCIKRMPQYTGPGSVPGALDYTSFSSALYGESDL</sequence>
<name>ACTN2_CHICK</name>
<keyword id="KW-0009">Actin-binding</keyword>
<keyword id="KW-0025">Alternative splicing</keyword>
<keyword id="KW-0106">Calcium</keyword>
<keyword id="KW-0963">Cytoplasm</keyword>
<keyword id="KW-0479">Metal-binding</keyword>
<keyword id="KW-1185">Reference proteome</keyword>
<keyword id="KW-0677">Repeat</keyword>
<keyword id="KW-0832">Ubl conjugation</keyword>
<organism>
    <name type="scientific">Gallus gallus</name>
    <name type="common">Chicken</name>
    <dbReference type="NCBI Taxonomy" id="9031"/>
    <lineage>
        <taxon>Eukaryota</taxon>
        <taxon>Metazoa</taxon>
        <taxon>Chordata</taxon>
        <taxon>Craniata</taxon>
        <taxon>Vertebrata</taxon>
        <taxon>Euteleostomi</taxon>
        <taxon>Archelosauria</taxon>
        <taxon>Archosauria</taxon>
        <taxon>Dinosauria</taxon>
        <taxon>Saurischia</taxon>
        <taxon>Theropoda</taxon>
        <taxon>Coelurosauria</taxon>
        <taxon>Aves</taxon>
        <taxon>Neognathae</taxon>
        <taxon>Galloanserae</taxon>
        <taxon>Galliformes</taxon>
        <taxon>Phasianidae</taxon>
        <taxon>Phasianinae</taxon>
        <taxon>Gallus</taxon>
    </lineage>
</organism>
<proteinExistence type="evidence at transcript level"/>
<gene>
    <name type="primary">ACTN2</name>
</gene>